<proteinExistence type="inferred from homology"/>
<name>PYRB_GLUDA</name>
<accession>A9GZR7</accession>
<accession>B5ZK55</accession>
<protein>
    <recommendedName>
        <fullName evidence="1">Aspartate carbamoyltransferase catalytic subunit</fullName>
        <ecNumber evidence="1">2.1.3.2</ecNumber>
    </recommendedName>
    <alternativeName>
        <fullName evidence="1">Aspartate transcarbamylase</fullName>
        <shortName evidence="1">ATCase</shortName>
    </alternativeName>
</protein>
<gene>
    <name evidence="1" type="primary">pyrB</name>
    <name type="ordered locus">GDI0049</name>
    <name type="ordered locus">Gdia_1641</name>
</gene>
<keyword id="KW-0665">Pyrimidine biosynthesis</keyword>
<keyword id="KW-1185">Reference proteome</keyword>
<keyword id="KW-0808">Transferase</keyword>
<dbReference type="EC" id="2.1.3.2" evidence="1"/>
<dbReference type="EMBL" id="AM889285">
    <property type="protein sequence ID" value="CAP53992.1"/>
    <property type="molecule type" value="Genomic_DNA"/>
</dbReference>
<dbReference type="EMBL" id="CP001189">
    <property type="protein sequence ID" value="ACI51418.1"/>
    <property type="molecule type" value="Genomic_DNA"/>
</dbReference>
<dbReference type="RefSeq" id="WP_012222297.1">
    <property type="nucleotide sequence ID" value="NC_010125.1"/>
</dbReference>
<dbReference type="SMR" id="A9GZR7"/>
<dbReference type="STRING" id="272568.GDI0049"/>
<dbReference type="KEGG" id="gdi:GDI0049"/>
<dbReference type="KEGG" id="gdj:Gdia_1641"/>
<dbReference type="eggNOG" id="COG0540">
    <property type="taxonomic scope" value="Bacteria"/>
</dbReference>
<dbReference type="HOGENOM" id="CLU_043846_2_0_5"/>
<dbReference type="OrthoDB" id="9774690at2"/>
<dbReference type="UniPathway" id="UPA00070">
    <property type="reaction ID" value="UER00116"/>
</dbReference>
<dbReference type="Proteomes" id="UP000001176">
    <property type="component" value="Chromosome"/>
</dbReference>
<dbReference type="GO" id="GO:0005829">
    <property type="term" value="C:cytosol"/>
    <property type="evidence" value="ECO:0007669"/>
    <property type="project" value="TreeGrafter"/>
</dbReference>
<dbReference type="GO" id="GO:0016597">
    <property type="term" value="F:amino acid binding"/>
    <property type="evidence" value="ECO:0007669"/>
    <property type="project" value="InterPro"/>
</dbReference>
<dbReference type="GO" id="GO:0004070">
    <property type="term" value="F:aspartate carbamoyltransferase activity"/>
    <property type="evidence" value="ECO:0007669"/>
    <property type="project" value="UniProtKB-UniRule"/>
</dbReference>
<dbReference type="GO" id="GO:0006207">
    <property type="term" value="P:'de novo' pyrimidine nucleobase biosynthetic process"/>
    <property type="evidence" value="ECO:0007669"/>
    <property type="project" value="InterPro"/>
</dbReference>
<dbReference type="GO" id="GO:0044205">
    <property type="term" value="P:'de novo' UMP biosynthetic process"/>
    <property type="evidence" value="ECO:0007669"/>
    <property type="project" value="UniProtKB-UniRule"/>
</dbReference>
<dbReference type="GO" id="GO:0006520">
    <property type="term" value="P:amino acid metabolic process"/>
    <property type="evidence" value="ECO:0007669"/>
    <property type="project" value="InterPro"/>
</dbReference>
<dbReference type="FunFam" id="3.40.50.1370:FF:000007">
    <property type="entry name" value="Aspartate carbamoyltransferase"/>
    <property type="match status" value="1"/>
</dbReference>
<dbReference type="Gene3D" id="3.40.50.1370">
    <property type="entry name" value="Aspartate/ornithine carbamoyltransferase"/>
    <property type="match status" value="2"/>
</dbReference>
<dbReference type="HAMAP" id="MF_00001">
    <property type="entry name" value="Asp_carb_tr"/>
    <property type="match status" value="1"/>
</dbReference>
<dbReference type="InterPro" id="IPR006132">
    <property type="entry name" value="Asp/Orn_carbamoyltranf_P-bd"/>
</dbReference>
<dbReference type="InterPro" id="IPR006130">
    <property type="entry name" value="Asp/Orn_carbamoylTrfase"/>
</dbReference>
<dbReference type="InterPro" id="IPR036901">
    <property type="entry name" value="Asp/Orn_carbamoylTrfase_sf"/>
</dbReference>
<dbReference type="InterPro" id="IPR002082">
    <property type="entry name" value="Asp_carbamoyltransf"/>
</dbReference>
<dbReference type="InterPro" id="IPR006131">
    <property type="entry name" value="Asp_carbamoyltransf_Asp/Orn-bd"/>
</dbReference>
<dbReference type="NCBIfam" id="TIGR00670">
    <property type="entry name" value="asp_carb_tr"/>
    <property type="match status" value="1"/>
</dbReference>
<dbReference type="NCBIfam" id="NF002032">
    <property type="entry name" value="PRK00856.1"/>
    <property type="match status" value="1"/>
</dbReference>
<dbReference type="PANTHER" id="PTHR45753:SF6">
    <property type="entry name" value="ASPARTATE CARBAMOYLTRANSFERASE"/>
    <property type="match status" value="1"/>
</dbReference>
<dbReference type="PANTHER" id="PTHR45753">
    <property type="entry name" value="ORNITHINE CARBAMOYLTRANSFERASE, MITOCHONDRIAL"/>
    <property type="match status" value="1"/>
</dbReference>
<dbReference type="Pfam" id="PF00185">
    <property type="entry name" value="OTCace"/>
    <property type="match status" value="1"/>
</dbReference>
<dbReference type="Pfam" id="PF02729">
    <property type="entry name" value="OTCace_N"/>
    <property type="match status" value="1"/>
</dbReference>
<dbReference type="PRINTS" id="PR00100">
    <property type="entry name" value="AOTCASE"/>
</dbReference>
<dbReference type="PRINTS" id="PR00101">
    <property type="entry name" value="ATCASE"/>
</dbReference>
<dbReference type="SUPFAM" id="SSF53671">
    <property type="entry name" value="Aspartate/ornithine carbamoyltransferase"/>
    <property type="match status" value="1"/>
</dbReference>
<dbReference type="PROSITE" id="PS00097">
    <property type="entry name" value="CARBAMOYLTRANSFERASE"/>
    <property type="match status" value="1"/>
</dbReference>
<sequence>MTDGPRAAAPRFFPQHARHLLGLQGMHPTRIEPFLDLAESYALMSRSRKTPRDRLLGRTVINLFFEDSTRTRTSFELAAKRLGADVINMTVASSSVNKGETLLDTAATLNAMRTDLLVVRHSQSGAPALLARKVEASVVNAGDGTHEHPTQALLDALTIRRHFGTLHGLTVAICGDVSHSRVARSNIHLLTAMGARVRVVGPPTLIPGAIGALGVDVHYTMEDGLRDVDVVMMLRMQRERMSGGQVPSAREYFRFYGLDRKRLAVARPGALVMHPGPMNRGVEIDSRVADSDQSVIREQVEMGVAVRMAVLDLLSRAGDQS</sequence>
<evidence type="ECO:0000255" key="1">
    <source>
        <dbReference type="HAMAP-Rule" id="MF_00001"/>
    </source>
</evidence>
<reference key="1">
    <citation type="journal article" date="2009" name="BMC Genomics">
        <title>Complete genome sequence of the sugarcane nitrogen-fixing endophyte Gluconacetobacter diazotrophicus Pal5.</title>
        <authorList>
            <person name="Bertalan M."/>
            <person name="Albano R."/>
            <person name="de Padua V."/>
            <person name="Rouws L."/>
            <person name="Rojas C."/>
            <person name="Hemerly A."/>
            <person name="Teixeira K."/>
            <person name="Schwab S."/>
            <person name="Araujo J."/>
            <person name="Oliveira A."/>
            <person name="Franca L."/>
            <person name="Magalhaes V."/>
            <person name="Alqueres S."/>
            <person name="Cardoso A."/>
            <person name="Almeida W."/>
            <person name="Loureiro M.M."/>
            <person name="Nogueira E."/>
            <person name="Cidade D."/>
            <person name="Oliveira D."/>
            <person name="Simao T."/>
            <person name="Macedo J."/>
            <person name="Valadao A."/>
            <person name="Dreschsel M."/>
            <person name="Freitas F."/>
            <person name="Vidal M."/>
            <person name="Guedes H."/>
            <person name="Rodrigues E."/>
            <person name="Meneses C."/>
            <person name="Brioso P."/>
            <person name="Pozzer L."/>
            <person name="Figueiredo D."/>
            <person name="Montano H."/>
            <person name="Junior J."/>
            <person name="de Souza Filho G."/>
            <person name="Martin Quintana Flores V."/>
            <person name="Ferreira B."/>
            <person name="Branco A."/>
            <person name="Gonzalez P."/>
            <person name="Guillobel H."/>
            <person name="Lemos M."/>
            <person name="Seibel L."/>
            <person name="Macedo J."/>
            <person name="Alves-Ferreira M."/>
            <person name="Sachetto-Martins G."/>
            <person name="Coelho A."/>
            <person name="Santos E."/>
            <person name="Amaral G."/>
            <person name="Neves A."/>
            <person name="Pacheco A.B."/>
            <person name="Carvalho D."/>
            <person name="Lery L."/>
            <person name="Bisch P."/>
            <person name="Rossle S.C."/>
            <person name="Urmenyi T."/>
            <person name="Rael Pereira A."/>
            <person name="Silva R."/>
            <person name="Rondinelli E."/>
            <person name="von Kruger W."/>
            <person name="Martins O."/>
            <person name="Baldani J.I."/>
            <person name="Ferreira P.C."/>
        </authorList>
    </citation>
    <scope>NUCLEOTIDE SEQUENCE [LARGE SCALE GENOMIC DNA]</scope>
    <source>
        <strain>ATCC 49037 / DSM 5601 / CCUG 37298 / CIP 103539 / LMG 7603 / PAl5</strain>
    </source>
</reference>
<reference key="2">
    <citation type="journal article" date="2010" name="Stand. Genomic Sci.">
        <title>Two genome sequences of the same bacterial strain, Gluconacetobacter diazotrophicus PAl 5, suggest a new standard in genome sequence submission.</title>
        <authorList>
            <person name="Giongo A."/>
            <person name="Tyler H.L."/>
            <person name="Zipperer U.N."/>
            <person name="Triplett E.W."/>
        </authorList>
    </citation>
    <scope>NUCLEOTIDE SEQUENCE [LARGE SCALE GENOMIC DNA]</scope>
    <source>
        <strain>ATCC 49037 / DSM 5601 / CCUG 37298 / CIP 103539 / LMG 7603 / PAl5</strain>
    </source>
</reference>
<comment type="function">
    <text evidence="1">Catalyzes the condensation of carbamoyl phosphate and aspartate to form carbamoyl aspartate and inorganic phosphate, the committed step in the de novo pyrimidine nucleotide biosynthesis pathway.</text>
</comment>
<comment type="catalytic activity">
    <reaction evidence="1">
        <text>carbamoyl phosphate + L-aspartate = N-carbamoyl-L-aspartate + phosphate + H(+)</text>
        <dbReference type="Rhea" id="RHEA:20013"/>
        <dbReference type="ChEBI" id="CHEBI:15378"/>
        <dbReference type="ChEBI" id="CHEBI:29991"/>
        <dbReference type="ChEBI" id="CHEBI:32814"/>
        <dbReference type="ChEBI" id="CHEBI:43474"/>
        <dbReference type="ChEBI" id="CHEBI:58228"/>
        <dbReference type="EC" id="2.1.3.2"/>
    </reaction>
</comment>
<comment type="pathway">
    <text evidence="1">Pyrimidine metabolism; UMP biosynthesis via de novo pathway; (S)-dihydroorotate from bicarbonate: step 2/3.</text>
</comment>
<comment type="subunit">
    <text evidence="1">Heterododecamer (2C3:3R2) of six catalytic PyrB chains organized as two trimers (C3), and six regulatory PyrI chains organized as three dimers (R2).</text>
</comment>
<comment type="similarity">
    <text evidence="1">Belongs to the aspartate/ornithine carbamoyltransferase superfamily. ATCase family.</text>
</comment>
<feature type="chain" id="PRO_1000073732" description="Aspartate carbamoyltransferase catalytic subunit">
    <location>
        <begin position="1"/>
        <end position="321"/>
    </location>
</feature>
<feature type="binding site" evidence="1">
    <location>
        <position position="70"/>
    </location>
    <ligand>
        <name>carbamoyl phosphate</name>
        <dbReference type="ChEBI" id="CHEBI:58228"/>
    </ligand>
</feature>
<feature type="binding site" evidence="1">
    <location>
        <position position="71"/>
    </location>
    <ligand>
        <name>carbamoyl phosphate</name>
        <dbReference type="ChEBI" id="CHEBI:58228"/>
    </ligand>
</feature>
<feature type="binding site" evidence="1">
    <location>
        <position position="98"/>
    </location>
    <ligand>
        <name>L-aspartate</name>
        <dbReference type="ChEBI" id="CHEBI:29991"/>
    </ligand>
</feature>
<feature type="binding site" evidence="1">
    <location>
        <position position="120"/>
    </location>
    <ligand>
        <name>carbamoyl phosphate</name>
        <dbReference type="ChEBI" id="CHEBI:58228"/>
    </ligand>
</feature>
<feature type="binding site" evidence="1">
    <location>
        <position position="148"/>
    </location>
    <ligand>
        <name>carbamoyl phosphate</name>
        <dbReference type="ChEBI" id="CHEBI:58228"/>
    </ligand>
</feature>
<feature type="binding site" evidence="1">
    <location>
        <position position="151"/>
    </location>
    <ligand>
        <name>carbamoyl phosphate</name>
        <dbReference type="ChEBI" id="CHEBI:58228"/>
    </ligand>
</feature>
<feature type="binding site" evidence="1">
    <location>
        <position position="181"/>
    </location>
    <ligand>
        <name>L-aspartate</name>
        <dbReference type="ChEBI" id="CHEBI:29991"/>
    </ligand>
</feature>
<feature type="binding site" evidence="1">
    <location>
        <position position="235"/>
    </location>
    <ligand>
        <name>L-aspartate</name>
        <dbReference type="ChEBI" id="CHEBI:29991"/>
    </ligand>
</feature>
<feature type="binding site" evidence="1">
    <location>
        <position position="276"/>
    </location>
    <ligand>
        <name>carbamoyl phosphate</name>
        <dbReference type="ChEBI" id="CHEBI:58228"/>
    </ligand>
</feature>
<feature type="binding site" evidence="1">
    <location>
        <position position="277"/>
    </location>
    <ligand>
        <name>carbamoyl phosphate</name>
        <dbReference type="ChEBI" id="CHEBI:58228"/>
    </ligand>
</feature>
<organism>
    <name type="scientific">Gluconacetobacter diazotrophicus (strain ATCC 49037 / DSM 5601 / CCUG 37298 / CIP 103539 / LMG 7603 / PAl5)</name>
    <dbReference type="NCBI Taxonomy" id="272568"/>
    <lineage>
        <taxon>Bacteria</taxon>
        <taxon>Pseudomonadati</taxon>
        <taxon>Pseudomonadota</taxon>
        <taxon>Alphaproteobacteria</taxon>
        <taxon>Acetobacterales</taxon>
        <taxon>Acetobacteraceae</taxon>
        <taxon>Gluconacetobacter</taxon>
    </lineage>
</organism>